<keyword id="KW-0997">Cell inner membrane</keyword>
<keyword id="KW-1003">Cell membrane</keyword>
<keyword id="KW-0472">Membrane</keyword>
<organism>
    <name type="scientific">Rickettsia canadensis (strain McKiel)</name>
    <dbReference type="NCBI Taxonomy" id="293613"/>
    <lineage>
        <taxon>Bacteria</taxon>
        <taxon>Pseudomonadati</taxon>
        <taxon>Pseudomonadota</taxon>
        <taxon>Alphaproteobacteria</taxon>
        <taxon>Rickettsiales</taxon>
        <taxon>Rickettsiaceae</taxon>
        <taxon>Rickettsieae</taxon>
        <taxon>Rickettsia</taxon>
        <taxon>belli group</taxon>
    </lineage>
</organism>
<feature type="chain" id="PRO_1000013121" description="Putative membrane protein insertion efficiency factor">
    <location>
        <begin position="1"/>
        <end position="88"/>
    </location>
</feature>
<evidence type="ECO:0000255" key="1">
    <source>
        <dbReference type="HAMAP-Rule" id="MF_00386"/>
    </source>
</evidence>
<dbReference type="EMBL" id="CP000409">
    <property type="protein sequence ID" value="ABV73672.1"/>
    <property type="molecule type" value="Genomic_DNA"/>
</dbReference>
<dbReference type="STRING" id="293613.A1E_03705"/>
<dbReference type="KEGG" id="rcm:A1E_03705"/>
<dbReference type="eggNOG" id="COG0759">
    <property type="taxonomic scope" value="Bacteria"/>
</dbReference>
<dbReference type="HOGENOM" id="CLU_144811_2_2_5"/>
<dbReference type="Proteomes" id="UP000007056">
    <property type="component" value="Chromosome"/>
</dbReference>
<dbReference type="GO" id="GO:0005886">
    <property type="term" value="C:plasma membrane"/>
    <property type="evidence" value="ECO:0007669"/>
    <property type="project" value="UniProtKB-SubCell"/>
</dbReference>
<dbReference type="HAMAP" id="MF_00386">
    <property type="entry name" value="UPF0161_YidD"/>
    <property type="match status" value="1"/>
</dbReference>
<dbReference type="InterPro" id="IPR002696">
    <property type="entry name" value="Membr_insert_effic_factor_YidD"/>
</dbReference>
<dbReference type="NCBIfam" id="TIGR00278">
    <property type="entry name" value="membrane protein insertion efficiency factor YidD"/>
    <property type="match status" value="1"/>
</dbReference>
<dbReference type="PANTHER" id="PTHR33383">
    <property type="entry name" value="MEMBRANE PROTEIN INSERTION EFFICIENCY FACTOR-RELATED"/>
    <property type="match status" value="1"/>
</dbReference>
<dbReference type="PANTHER" id="PTHR33383:SF1">
    <property type="entry name" value="MEMBRANE PROTEIN INSERTION EFFICIENCY FACTOR-RELATED"/>
    <property type="match status" value="1"/>
</dbReference>
<dbReference type="Pfam" id="PF01809">
    <property type="entry name" value="YidD"/>
    <property type="match status" value="1"/>
</dbReference>
<dbReference type="SMART" id="SM01234">
    <property type="entry name" value="Haemolytic"/>
    <property type="match status" value="1"/>
</dbReference>
<gene>
    <name type="ordered locus">A1E_03705</name>
</gene>
<comment type="function">
    <text evidence="1">Could be involved in insertion of integral membrane proteins into the membrane.</text>
</comment>
<comment type="subcellular location">
    <subcellularLocation>
        <location evidence="1">Cell inner membrane</location>
        <topology evidence="1">Peripheral membrane protein</topology>
        <orientation evidence="1">Cytoplasmic side</orientation>
    </subcellularLocation>
</comment>
<comment type="similarity">
    <text evidence="1">Belongs to the UPF0161 family.</text>
</comment>
<reference key="1">
    <citation type="submission" date="2007-09" db="EMBL/GenBank/DDBJ databases">
        <title>Complete genome sequence of Rickettsia canadensis.</title>
        <authorList>
            <person name="Madan A."/>
            <person name="Fahey J."/>
            <person name="Helton E."/>
            <person name="Ketteman M."/>
            <person name="Madan A."/>
            <person name="Rodrigues S."/>
            <person name="Sanchez A."/>
            <person name="Whiting M."/>
            <person name="Dasch G."/>
            <person name="Eremeeva M."/>
        </authorList>
    </citation>
    <scope>NUCLEOTIDE SEQUENCE [LARGE SCALE GENOMIC DNA]</scope>
    <source>
        <strain>McKiel</strain>
    </source>
</reference>
<name>YIDD_RICCK</name>
<proteinExistence type="inferred from homology"/>
<protein>
    <recommendedName>
        <fullName evidence="1">Putative membrane protein insertion efficiency factor</fullName>
    </recommendedName>
</protein>
<sequence>MSKILLLLIRFYQYFISPLLGNNCRFHPTCSEYAKESITLYGSLKGLWRAFKRIIKCQPFYNGTVLYDTEVRCHARKSGNPVKNKEPK</sequence>
<accession>A8EZ89</accession>